<sequence length="485" mass="56523">MEKSKNIWSLILTEIKKELSEEEFYVWFENLCFLESVGDNIKISTPNLFHKNQIEKRFTKKIKEILTNNGYDNVTIVFTNQSPKTYSSKEESEKTTFNETFPTLDKLKGTTLSKEPLQSIKDRIKMYIKKEEEPKNFKNPFLKKRYTFENFIIGPNNKLAYNASLSISKNPGTKYNPCLIYGGVGLGKTHLLQSIGNKTEELHNNLKILYVTAENFLNEFVESIKTHETKKFKKKYRYLDMLLIDDIHDLQKKEGIQEELFHTFNALYEDNKQLVFTCDRPPSELTNFTDRLKSRFTRGLNVDISKPNFELRVAIIEKKAEEDGIKVPKNILNLVAQKVTTNVRDLEAAVTKLKAYIDLDNIEIDIDIVEKIIKEIIIYEKETTNEPSNKINIENIKKILLRELKIAHKDIEGHSKKPEITKARHIYAYLLRNFTELSTIEIGKIIGGKTHSTVLYSINKIDRDRNKDKEINNLITELMNKIKKN</sequence>
<name>DNAA_BORAP</name>
<gene>
    <name evidence="1" type="primary">dnaA</name>
    <name type="ordered locus">BAPKO_0459</name>
    <name type="ordered locus">BafPKo_0448</name>
</gene>
<proteinExistence type="inferred from homology"/>
<dbReference type="EMBL" id="CP000395">
    <property type="protein sequence ID" value="ABH01706.1"/>
    <property type="molecule type" value="Genomic_DNA"/>
</dbReference>
<dbReference type="EMBL" id="CP002933">
    <property type="protein sequence ID" value="AEL69660.1"/>
    <property type="molecule type" value="Genomic_DNA"/>
</dbReference>
<dbReference type="RefSeq" id="WP_004789881.1">
    <property type="nucleotide sequence ID" value="NZ_CP160066.1"/>
</dbReference>
<dbReference type="SMR" id="Q0SN72"/>
<dbReference type="STRING" id="29518.BLA32_02095"/>
<dbReference type="KEGG" id="baf:BAPKO_0459"/>
<dbReference type="KEGG" id="bafz:BafPKo_0448"/>
<dbReference type="PATRIC" id="fig|390236.22.peg.432"/>
<dbReference type="eggNOG" id="COG0593">
    <property type="taxonomic scope" value="Bacteria"/>
</dbReference>
<dbReference type="HOGENOM" id="CLU_026910_3_1_12"/>
<dbReference type="OrthoDB" id="9807019at2"/>
<dbReference type="Proteomes" id="UP000005216">
    <property type="component" value="Chromosome"/>
</dbReference>
<dbReference type="GO" id="GO:0005737">
    <property type="term" value="C:cytoplasm"/>
    <property type="evidence" value="ECO:0007669"/>
    <property type="project" value="UniProtKB-SubCell"/>
</dbReference>
<dbReference type="GO" id="GO:0005886">
    <property type="term" value="C:plasma membrane"/>
    <property type="evidence" value="ECO:0007669"/>
    <property type="project" value="TreeGrafter"/>
</dbReference>
<dbReference type="GO" id="GO:0005524">
    <property type="term" value="F:ATP binding"/>
    <property type="evidence" value="ECO:0007669"/>
    <property type="project" value="UniProtKB-UniRule"/>
</dbReference>
<dbReference type="GO" id="GO:0016887">
    <property type="term" value="F:ATP hydrolysis activity"/>
    <property type="evidence" value="ECO:0007669"/>
    <property type="project" value="InterPro"/>
</dbReference>
<dbReference type="GO" id="GO:0003688">
    <property type="term" value="F:DNA replication origin binding"/>
    <property type="evidence" value="ECO:0007669"/>
    <property type="project" value="UniProtKB-UniRule"/>
</dbReference>
<dbReference type="GO" id="GO:0008289">
    <property type="term" value="F:lipid binding"/>
    <property type="evidence" value="ECO:0007669"/>
    <property type="project" value="UniProtKB-KW"/>
</dbReference>
<dbReference type="GO" id="GO:0006270">
    <property type="term" value="P:DNA replication initiation"/>
    <property type="evidence" value="ECO:0007669"/>
    <property type="project" value="UniProtKB-UniRule"/>
</dbReference>
<dbReference type="GO" id="GO:0006275">
    <property type="term" value="P:regulation of DNA replication"/>
    <property type="evidence" value="ECO:0007669"/>
    <property type="project" value="UniProtKB-UniRule"/>
</dbReference>
<dbReference type="CDD" id="cd00009">
    <property type="entry name" value="AAA"/>
    <property type="match status" value="1"/>
</dbReference>
<dbReference type="CDD" id="cd06571">
    <property type="entry name" value="Bac_DnaA_C"/>
    <property type="match status" value="1"/>
</dbReference>
<dbReference type="FunFam" id="3.40.50.300:FF:000668">
    <property type="entry name" value="Chromosomal replication initiator protein DnaA"/>
    <property type="match status" value="1"/>
</dbReference>
<dbReference type="Gene3D" id="1.10.1750.10">
    <property type="match status" value="1"/>
</dbReference>
<dbReference type="Gene3D" id="1.10.8.60">
    <property type="match status" value="1"/>
</dbReference>
<dbReference type="Gene3D" id="3.30.300.180">
    <property type="match status" value="1"/>
</dbReference>
<dbReference type="Gene3D" id="3.40.50.300">
    <property type="entry name" value="P-loop containing nucleotide triphosphate hydrolases"/>
    <property type="match status" value="1"/>
</dbReference>
<dbReference type="HAMAP" id="MF_00377">
    <property type="entry name" value="DnaA_bact"/>
    <property type="match status" value="1"/>
</dbReference>
<dbReference type="InterPro" id="IPR003593">
    <property type="entry name" value="AAA+_ATPase"/>
</dbReference>
<dbReference type="InterPro" id="IPR001957">
    <property type="entry name" value="Chromosome_initiator_DnaA"/>
</dbReference>
<dbReference type="InterPro" id="IPR020591">
    <property type="entry name" value="Chromosome_initiator_DnaA-like"/>
</dbReference>
<dbReference type="InterPro" id="IPR018312">
    <property type="entry name" value="Chromosome_initiator_DnaA_CS"/>
</dbReference>
<dbReference type="InterPro" id="IPR013159">
    <property type="entry name" value="DnaA_C"/>
</dbReference>
<dbReference type="InterPro" id="IPR013317">
    <property type="entry name" value="DnaA_dom"/>
</dbReference>
<dbReference type="InterPro" id="IPR024633">
    <property type="entry name" value="DnaA_N_dom"/>
</dbReference>
<dbReference type="InterPro" id="IPR038454">
    <property type="entry name" value="DnaA_N_sf"/>
</dbReference>
<dbReference type="InterPro" id="IPR027417">
    <property type="entry name" value="P-loop_NTPase"/>
</dbReference>
<dbReference type="InterPro" id="IPR010921">
    <property type="entry name" value="Trp_repressor/repl_initiator"/>
</dbReference>
<dbReference type="NCBIfam" id="TIGR00362">
    <property type="entry name" value="DnaA"/>
    <property type="match status" value="1"/>
</dbReference>
<dbReference type="PANTHER" id="PTHR30050">
    <property type="entry name" value="CHROMOSOMAL REPLICATION INITIATOR PROTEIN DNAA"/>
    <property type="match status" value="1"/>
</dbReference>
<dbReference type="PANTHER" id="PTHR30050:SF2">
    <property type="entry name" value="CHROMOSOMAL REPLICATION INITIATOR PROTEIN DNAA"/>
    <property type="match status" value="1"/>
</dbReference>
<dbReference type="Pfam" id="PF00308">
    <property type="entry name" value="Bac_DnaA"/>
    <property type="match status" value="1"/>
</dbReference>
<dbReference type="Pfam" id="PF08299">
    <property type="entry name" value="Bac_DnaA_C"/>
    <property type="match status" value="1"/>
</dbReference>
<dbReference type="Pfam" id="PF11638">
    <property type="entry name" value="DnaA_N"/>
    <property type="match status" value="1"/>
</dbReference>
<dbReference type="PRINTS" id="PR00051">
    <property type="entry name" value="DNAA"/>
</dbReference>
<dbReference type="SMART" id="SM00382">
    <property type="entry name" value="AAA"/>
    <property type="match status" value="1"/>
</dbReference>
<dbReference type="SMART" id="SM00760">
    <property type="entry name" value="Bac_DnaA_C"/>
    <property type="match status" value="1"/>
</dbReference>
<dbReference type="SUPFAM" id="SSF52540">
    <property type="entry name" value="P-loop containing nucleoside triphosphate hydrolases"/>
    <property type="match status" value="1"/>
</dbReference>
<dbReference type="SUPFAM" id="SSF48295">
    <property type="entry name" value="TrpR-like"/>
    <property type="match status" value="1"/>
</dbReference>
<dbReference type="PROSITE" id="PS01008">
    <property type="entry name" value="DNAA"/>
    <property type="match status" value="1"/>
</dbReference>
<evidence type="ECO:0000255" key="1">
    <source>
        <dbReference type="HAMAP-Rule" id="MF_00377"/>
    </source>
</evidence>
<keyword id="KW-0067">ATP-binding</keyword>
<keyword id="KW-0963">Cytoplasm</keyword>
<keyword id="KW-0235">DNA replication</keyword>
<keyword id="KW-0238">DNA-binding</keyword>
<keyword id="KW-0446">Lipid-binding</keyword>
<keyword id="KW-0547">Nucleotide-binding</keyword>
<organism>
    <name type="scientific">Borreliella afzelii (strain PKo)</name>
    <name type="common">Borrelia afzelii</name>
    <dbReference type="NCBI Taxonomy" id="390236"/>
    <lineage>
        <taxon>Bacteria</taxon>
        <taxon>Pseudomonadati</taxon>
        <taxon>Spirochaetota</taxon>
        <taxon>Spirochaetia</taxon>
        <taxon>Spirochaetales</taxon>
        <taxon>Borreliaceae</taxon>
        <taxon>Borreliella</taxon>
    </lineage>
</organism>
<feature type="chain" id="PRO_1000048609" description="Chromosomal replication initiator protein DnaA">
    <location>
        <begin position="1"/>
        <end position="485"/>
    </location>
</feature>
<feature type="region of interest" description="Domain I, interacts with DnaA modulators" evidence="1">
    <location>
        <begin position="1"/>
        <end position="74"/>
    </location>
</feature>
<feature type="region of interest" description="Domain II" evidence="1">
    <location>
        <begin position="74"/>
        <end position="140"/>
    </location>
</feature>
<feature type="region of interest" description="Domain III, AAA+ region" evidence="1">
    <location>
        <begin position="141"/>
        <end position="357"/>
    </location>
</feature>
<feature type="region of interest" description="Domain IV, binds dsDNA" evidence="1">
    <location>
        <begin position="358"/>
        <end position="485"/>
    </location>
</feature>
<feature type="binding site" evidence="1">
    <location>
        <position position="185"/>
    </location>
    <ligand>
        <name>ATP</name>
        <dbReference type="ChEBI" id="CHEBI:30616"/>
    </ligand>
</feature>
<feature type="binding site" evidence="1">
    <location>
        <position position="187"/>
    </location>
    <ligand>
        <name>ATP</name>
        <dbReference type="ChEBI" id="CHEBI:30616"/>
    </ligand>
</feature>
<feature type="binding site" evidence="1">
    <location>
        <position position="188"/>
    </location>
    <ligand>
        <name>ATP</name>
        <dbReference type="ChEBI" id="CHEBI:30616"/>
    </ligand>
</feature>
<feature type="binding site" evidence="1">
    <location>
        <position position="189"/>
    </location>
    <ligand>
        <name>ATP</name>
        <dbReference type="ChEBI" id="CHEBI:30616"/>
    </ligand>
</feature>
<reference key="1">
    <citation type="journal article" date="2006" name="BMC Genomics">
        <title>Comparative genome analysis: selection pressure on the Borrelia vls cassettes is essential for infectivity.</title>
        <authorList>
            <person name="Gloeckner G."/>
            <person name="Schulte-Spechtel U."/>
            <person name="Schilhabel M."/>
            <person name="Felder M."/>
            <person name="Suehnel J."/>
            <person name="Wilske B."/>
            <person name="Platzer M."/>
        </authorList>
    </citation>
    <scope>NUCLEOTIDE SEQUENCE [LARGE SCALE GENOMIC DNA]</scope>
    <source>
        <strain>PKo</strain>
    </source>
</reference>
<reference key="2">
    <citation type="journal article" date="2011" name="J. Bacteriol.">
        <title>Whole-genome sequences of two Borrelia afzelii and two Borrelia garinii Lyme disease agent isolates.</title>
        <authorList>
            <person name="Casjens S.R."/>
            <person name="Mongodin E.F."/>
            <person name="Qiu W.G."/>
            <person name="Dunn J.J."/>
            <person name="Luft B.J."/>
            <person name="Fraser-Liggett C.M."/>
            <person name="Schutzer S.E."/>
        </authorList>
    </citation>
    <scope>NUCLEOTIDE SEQUENCE [LARGE SCALE GENOMIC DNA]</scope>
    <source>
        <strain>PKo</strain>
    </source>
</reference>
<accession>Q0SN72</accession>
<accession>G0IS79</accession>
<comment type="function">
    <text evidence="1">Plays an essential role in the initiation and regulation of chromosomal replication. ATP-DnaA binds to the origin of replication (oriC) to initiate formation of the DNA replication initiation complex once per cell cycle. Binds the DnaA box (a 9 base pair repeat at the origin) and separates the double-stranded (ds)DNA. Forms a right-handed helical filament on oriC DNA; dsDNA binds to the exterior of the filament while single-stranded (ss)DNA is stabiized in the filament's interior. The ATP-DnaA-oriC complex binds and stabilizes one strand of the AT-rich DNA unwinding element (DUE), permitting loading of DNA polymerase. After initiation quickly degrades to an ADP-DnaA complex that is not apt for DNA replication. Binds acidic phospholipids.</text>
</comment>
<comment type="subunit">
    <text evidence="1">Oligomerizes as a right-handed, spiral filament on DNA at oriC.</text>
</comment>
<comment type="subcellular location">
    <subcellularLocation>
        <location evidence="1">Cytoplasm</location>
    </subcellularLocation>
</comment>
<comment type="domain">
    <text evidence="1">Domain I is involved in oligomerization and binding regulators, domain II is flexibile and of varying length in different bacteria, domain III forms the AAA+ region, while domain IV binds dsDNA.</text>
</comment>
<comment type="similarity">
    <text evidence="1">Belongs to the DnaA family.</text>
</comment>
<protein>
    <recommendedName>
        <fullName evidence="1">Chromosomal replication initiator protein DnaA</fullName>
    </recommendedName>
</protein>